<evidence type="ECO:0000250" key="1">
    <source>
        <dbReference type="UniProtKB" id="P17612"/>
    </source>
</evidence>
<evidence type="ECO:0000255" key="2">
    <source>
        <dbReference type="PROSITE-ProRule" id="PRU00159"/>
    </source>
</evidence>
<evidence type="ECO:0000255" key="3">
    <source>
        <dbReference type="PROSITE-ProRule" id="PRU00618"/>
    </source>
</evidence>
<evidence type="ECO:0000256" key="4">
    <source>
        <dbReference type="SAM" id="MobiDB-lite"/>
    </source>
</evidence>
<evidence type="ECO:0000269" key="5">
    <source>
    </source>
</evidence>
<evidence type="ECO:0000303" key="6">
    <source>
    </source>
</evidence>
<evidence type="ECO:0000305" key="7"/>
<evidence type="ECO:0000312" key="8">
    <source>
        <dbReference type="EMBL" id="EGX52090.1"/>
    </source>
</evidence>
<evidence type="ECO:0000312" key="9">
    <source>
        <dbReference type="Proteomes" id="UP000008784"/>
    </source>
</evidence>
<dbReference type="EC" id="2.7.11.11" evidence="1"/>
<dbReference type="EMBL" id="ADOT01000059">
    <property type="protein sequence ID" value="EGX52090.1"/>
    <property type="molecule type" value="Genomic_DNA"/>
</dbReference>
<dbReference type="RefSeq" id="XP_011119268.1">
    <property type="nucleotide sequence ID" value="XM_011120966.1"/>
</dbReference>
<dbReference type="FunCoup" id="G1X456">
    <property type="interactions" value="895"/>
</dbReference>
<dbReference type="STRING" id="756982.G1X456"/>
<dbReference type="GeneID" id="22890197"/>
<dbReference type="eggNOG" id="KOG0616">
    <property type="taxonomic scope" value="Eukaryota"/>
</dbReference>
<dbReference type="HOGENOM" id="CLU_000288_63_3_1"/>
<dbReference type="InParanoid" id="G1X456"/>
<dbReference type="OMA" id="EYGHMFT"/>
<dbReference type="OrthoDB" id="10768at2759"/>
<dbReference type="Proteomes" id="UP000008784">
    <property type="component" value="Unassembled WGS sequence"/>
</dbReference>
<dbReference type="GO" id="GO:0005952">
    <property type="term" value="C:cAMP-dependent protein kinase complex"/>
    <property type="evidence" value="ECO:0007669"/>
    <property type="project" value="EnsemblFungi"/>
</dbReference>
<dbReference type="GO" id="GO:0005829">
    <property type="term" value="C:cytosol"/>
    <property type="evidence" value="ECO:0007669"/>
    <property type="project" value="EnsemblFungi"/>
</dbReference>
<dbReference type="GO" id="GO:0000324">
    <property type="term" value="C:fungal-type vacuole"/>
    <property type="evidence" value="ECO:0007669"/>
    <property type="project" value="EnsemblFungi"/>
</dbReference>
<dbReference type="GO" id="GO:0005654">
    <property type="term" value="C:nucleoplasm"/>
    <property type="evidence" value="ECO:0007669"/>
    <property type="project" value="EnsemblFungi"/>
</dbReference>
<dbReference type="GO" id="GO:0005524">
    <property type="term" value="F:ATP binding"/>
    <property type="evidence" value="ECO:0007669"/>
    <property type="project" value="UniProtKB-UniRule"/>
</dbReference>
<dbReference type="GO" id="GO:0004691">
    <property type="term" value="F:cAMP-dependent protein kinase activity"/>
    <property type="evidence" value="ECO:0007669"/>
    <property type="project" value="EnsemblFungi"/>
</dbReference>
<dbReference type="GO" id="GO:0010619">
    <property type="term" value="P:adenylate cyclase-activating glucose-activated G protein-coupled receptor signaling pathway"/>
    <property type="evidence" value="ECO:0007669"/>
    <property type="project" value="EnsemblFungi"/>
</dbReference>
<dbReference type="GO" id="GO:0045721">
    <property type="term" value="P:negative regulation of gluconeogenesis"/>
    <property type="evidence" value="ECO:0007669"/>
    <property type="project" value="EnsemblFungi"/>
</dbReference>
<dbReference type="GO" id="GO:0010515">
    <property type="term" value="P:negative regulation of induction of conjugation with cellular fusion"/>
    <property type="evidence" value="ECO:0007669"/>
    <property type="project" value="EnsemblFungi"/>
</dbReference>
<dbReference type="GO" id="GO:0000122">
    <property type="term" value="P:negative regulation of transcription by RNA polymerase II"/>
    <property type="evidence" value="ECO:0007669"/>
    <property type="project" value="EnsemblFungi"/>
</dbReference>
<dbReference type="GO" id="GO:0046827">
    <property type="term" value="P:positive regulation of protein export from nucleus"/>
    <property type="evidence" value="ECO:0007669"/>
    <property type="project" value="EnsemblFungi"/>
</dbReference>
<dbReference type="CDD" id="cd05580">
    <property type="entry name" value="STKc_PKA_like"/>
    <property type="match status" value="1"/>
</dbReference>
<dbReference type="FunFam" id="3.30.200.20:FF:000005">
    <property type="entry name" value="cAMP-dependent protein kinase catalytic subunit"/>
    <property type="match status" value="1"/>
</dbReference>
<dbReference type="FunFam" id="1.10.510.10:FF:000005">
    <property type="entry name" value="cAMP-dependent protein kinase catalytic subunit alpha"/>
    <property type="match status" value="1"/>
</dbReference>
<dbReference type="Gene3D" id="3.30.200.20">
    <property type="entry name" value="Phosphorylase Kinase, domain 1"/>
    <property type="match status" value="1"/>
</dbReference>
<dbReference type="Gene3D" id="1.10.510.10">
    <property type="entry name" value="Transferase(Phosphotransferase) domain 1"/>
    <property type="match status" value="1"/>
</dbReference>
<dbReference type="InterPro" id="IPR000961">
    <property type="entry name" value="AGC-kinase_C"/>
</dbReference>
<dbReference type="InterPro" id="IPR011009">
    <property type="entry name" value="Kinase-like_dom_sf"/>
</dbReference>
<dbReference type="InterPro" id="IPR000719">
    <property type="entry name" value="Prot_kinase_dom"/>
</dbReference>
<dbReference type="InterPro" id="IPR017441">
    <property type="entry name" value="Protein_kinase_ATP_BS"/>
</dbReference>
<dbReference type="InterPro" id="IPR008271">
    <property type="entry name" value="Ser/Thr_kinase_AS"/>
</dbReference>
<dbReference type="PANTHER" id="PTHR24353:SF153">
    <property type="entry name" value="CAMP-DEPENDENT PROTEIN KINASE CATALYTIC SUBUNIT 1"/>
    <property type="match status" value="1"/>
</dbReference>
<dbReference type="PANTHER" id="PTHR24353">
    <property type="entry name" value="CYCLIC NUCLEOTIDE-DEPENDENT PROTEIN KINASE"/>
    <property type="match status" value="1"/>
</dbReference>
<dbReference type="Pfam" id="PF00069">
    <property type="entry name" value="Pkinase"/>
    <property type="match status" value="1"/>
</dbReference>
<dbReference type="SMART" id="SM00133">
    <property type="entry name" value="S_TK_X"/>
    <property type="match status" value="1"/>
</dbReference>
<dbReference type="SMART" id="SM00220">
    <property type="entry name" value="S_TKc"/>
    <property type="match status" value="1"/>
</dbReference>
<dbReference type="SUPFAM" id="SSF56112">
    <property type="entry name" value="Protein kinase-like (PK-like)"/>
    <property type="match status" value="1"/>
</dbReference>
<dbReference type="PROSITE" id="PS51285">
    <property type="entry name" value="AGC_KINASE_CTER"/>
    <property type="match status" value="1"/>
</dbReference>
<dbReference type="PROSITE" id="PS00107">
    <property type="entry name" value="PROTEIN_KINASE_ATP"/>
    <property type="match status" value="1"/>
</dbReference>
<dbReference type="PROSITE" id="PS50011">
    <property type="entry name" value="PROTEIN_KINASE_DOM"/>
    <property type="match status" value="1"/>
</dbReference>
<dbReference type="PROSITE" id="PS00108">
    <property type="entry name" value="PROTEIN_KINASE_ST"/>
    <property type="match status" value="1"/>
</dbReference>
<comment type="function">
    <text evidence="5">Functions downstream of adenylate cyclase to regulate trap-development for nematode capture.</text>
</comment>
<comment type="catalytic activity">
    <reaction evidence="1">
        <text>L-seryl-[protein] + ATP = O-phospho-L-seryl-[protein] + ADP + H(+)</text>
        <dbReference type="Rhea" id="RHEA:17989"/>
        <dbReference type="Rhea" id="RHEA-COMP:9863"/>
        <dbReference type="Rhea" id="RHEA-COMP:11604"/>
        <dbReference type="ChEBI" id="CHEBI:15378"/>
        <dbReference type="ChEBI" id="CHEBI:29999"/>
        <dbReference type="ChEBI" id="CHEBI:30616"/>
        <dbReference type="ChEBI" id="CHEBI:83421"/>
        <dbReference type="ChEBI" id="CHEBI:456216"/>
        <dbReference type="EC" id="2.7.11.11"/>
    </reaction>
</comment>
<comment type="catalytic activity">
    <reaction evidence="1">
        <text>L-threonyl-[protein] + ATP = O-phospho-L-threonyl-[protein] + ADP + H(+)</text>
        <dbReference type="Rhea" id="RHEA:46608"/>
        <dbReference type="Rhea" id="RHEA-COMP:11060"/>
        <dbReference type="Rhea" id="RHEA-COMP:11605"/>
        <dbReference type="ChEBI" id="CHEBI:15378"/>
        <dbReference type="ChEBI" id="CHEBI:30013"/>
        <dbReference type="ChEBI" id="CHEBI:30616"/>
        <dbReference type="ChEBI" id="CHEBI:61977"/>
        <dbReference type="ChEBI" id="CHEBI:456216"/>
        <dbReference type="EC" id="2.7.11.11"/>
    </reaction>
</comment>
<comment type="activity regulation">
    <text evidence="1">Activated by cAMP.</text>
</comment>
<comment type="induction">
    <text evidence="5">Induced following nematode exposure.</text>
</comment>
<comment type="disruption phenotype">
    <text evidence="5">Abolishes nematode trap development following exposure to C.elegans (PubMed:35993904). Decreases growth on rich medium and leads to a conidation defect with only 1 or 2 conidia per conidiophore (PubMed:35993904).</text>
</comment>
<comment type="similarity">
    <text evidence="7">Belongs to the protein kinase superfamily. Ser/Thr protein kinase family.</text>
</comment>
<gene>
    <name evidence="6" type="primary">TPK2</name>
    <name evidence="8" type="ORF">AOL_s00043g480</name>
</gene>
<feature type="chain" id="PRO_0000462170" description="cAMP-dependent protein kinase catalytic subunit">
    <location>
        <begin position="1"/>
        <end position="519"/>
    </location>
</feature>
<feature type="domain" description="Protein kinase" evidence="2">
    <location>
        <begin position="208"/>
        <end position="463"/>
    </location>
</feature>
<feature type="domain" description="AGC-kinase C-terminal" evidence="3">
    <location>
        <begin position="464"/>
        <end position="519"/>
    </location>
</feature>
<feature type="region of interest" description="Disordered" evidence="4">
    <location>
        <begin position="1"/>
        <end position="195"/>
    </location>
</feature>
<feature type="compositionally biased region" description="Polar residues" evidence="4">
    <location>
        <begin position="10"/>
        <end position="25"/>
    </location>
</feature>
<feature type="compositionally biased region" description="Polar residues" evidence="4">
    <location>
        <begin position="116"/>
        <end position="159"/>
    </location>
</feature>
<feature type="compositionally biased region" description="Polar residues" evidence="4">
    <location>
        <begin position="173"/>
        <end position="191"/>
    </location>
</feature>
<feature type="active site" description="Proton acceptor" evidence="2">
    <location>
        <position position="331"/>
    </location>
</feature>
<feature type="binding site" evidence="2">
    <location>
        <begin position="214"/>
        <end position="222"/>
    </location>
    <ligand>
        <name>ATP</name>
        <dbReference type="ChEBI" id="CHEBI:30616"/>
    </ligand>
</feature>
<feature type="binding site" evidence="2">
    <location>
        <position position="237"/>
    </location>
    <ligand>
        <name>ATP</name>
        <dbReference type="ChEBI" id="CHEBI:30616"/>
    </ligand>
</feature>
<sequence length="519" mass="57934">MLPDTGILSPFTTAVNPDPPQSQTLRVPRPTPVLDRPTTDSTANKRVKLDPTVSKVPWEPSVKPSSSKVEGASGLEQDSFMPTLGSVFKKKKKDKEATRLKDSSGNPDTIIEDSPVTPSTERSLSQSLGSAPSTATTANSHGGLSTVTSATSQTPTSPIATGGQAEKDHPMTTPVNESAGHSRSDSQTLQKAENAVRATKGKYTLQDFNFQRTLGTGSFGRVHLVQSKHNLRFYAVKVLKKAQVVKMKQVEHTNDERRMLQRVKHPFLITLWGTFQDAKNLYMVMDFIEGGELFSLLRKSQRFPNPVAKFYAAEVALALDYLHSMNIIYRDLKPENLLLDRHGHLKITDFGFAKEVPDITWTLCGTPDYLAPEVVASKGYNKSVDWWSLGILIFEMLCGYTPFWDGGSPMKIYENILRGRVKYPAYIHPDAMNLLQQLITPDLTKRLGNLYHGSRSVLEHPWFAEVNWERLLSKQIEPPYVPPVRGGIGDASLFDKYPEETEEYGKDGPDQYGHFFTDF</sequence>
<reference evidence="9" key="1">
    <citation type="journal article" date="2011" name="PLoS Pathog.">
        <title>Genomic and proteomic analyses of the fungus Arthrobotrys oligospora provide insights into nematode-trap formation.</title>
        <authorList>
            <person name="Yang J."/>
            <person name="Wang L."/>
            <person name="Ji X."/>
            <person name="Feng Y."/>
            <person name="Li X."/>
            <person name="Zou C."/>
            <person name="Xu J."/>
            <person name="Ren Y."/>
            <person name="Mi Q."/>
            <person name="Wu J."/>
            <person name="Liu S."/>
            <person name="Liu Y."/>
            <person name="Huang X."/>
            <person name="Wang H."/>
            <person name="Niu X."/>
            <person name="Li J."/>
            <person name="Liang L."/>
            <person name="Luo Y."/>
            <person name="Ji K."/>
            <person name="Zhou W."/>
            <person name="Yu Z."/>
            <person name="Li G."/>
            <person name="Liu Y."/>
            <person name="Li L."/>
            <person name="Qiao M."/>
            <person name="Feng L."/>
            <person name="Zhang K.-Q."/>
        </authorList>
    </citation>
    <scope>NUCLEOTIDE SEQUENCE [LARGE SCALE GENOMIC DNA]</scope>
    <source>
        <strain evidence="9">ATCC 24927 / CBS 115.81 / DSM 1491</strain>
    </source>
</reference>
<reference evidence="7" key="2">
    <citation type="journal article" date="2022" name="G3 (Bethesda)">
        <title>The cAMP-PKA pathway regulates prey sensing and trap morphogenesis in the nematode-trapping fungus Arthrobotrys oligospora.</title>
        <authorList>
            <person name="Chen S.A."/>
            <person name="Lin H.C."/>
            <person name="Hsueh Y.P."/>
        </authorList>
    </citation>
    <scope>FUNCTION</scope>
    <scope>INDUCTION</scope>
    <scope>DISRUPTION PHENOTYPE</scope>
</reference>
<keyword id="KW-0067">ATP-binding</keyword>
<keyword id="KW-0418">Kinase</keyword>
<keyword id="KW-0547">Nucleotide-binding</keyword>
<keyword id="KW-1185">Reference proteome</keyword>
<keyword id="KW-0723">Serine/threonine-protein kinase</keyword>
<keyword id="KW-0808">Transferase</keyword>
<proteinExistence type="evidence at transcript level"/>
<accession>G1X456</accession>
<name>KAPB_ARTOA</name>
<organism evidence="9">
    <name type="scientific">Arthrobotrys oligospora (strain ATCC 24927 / CBS 115.81 / DSM 1491)</name>
    <name type="common">Nematode-trapping fungus</name>
    <name type="synonym">Didymozoophaga oligospora</name>
    <dbReference type="NCBI Taxonomy" id="756982"/>
    <lineage>
        <taxon>Eukaryota</taxon>
        <taxon>Fungi</taxon>
        <taxon>Dikarya</taxon>
        <taxon>Ascomycota</taxon>
        <taxon>Pezizomycotina</taxon>
        <taxon>Orbiliomycetes</taxon>
        <taxon>Orbiliales</taxon>
        <taxon>Orbiliaceae</taxon>
        <taxon>Orbilia</taxon>
        <taxon>Orbilia oligospora</taxon>
    </lineage>
</organism>
<protein>
    <recommendedName>
        <fullName evidence="7">cAMP-dependent protein kinase catalytic subunit</fullName>
        <ecNumber evidence="1">2.7.11.11</ecNumber>
    </recommendedName>
</protein>